<proteinExistence type="inferred from homology"/>
<feature type="chain" id="PRO_1000079097" description="1-deoxy-D-xylulose-5-phosphate synthase">
    <location>
        <begin position="1"/>
        <end position="635"/>
    </location>
</feature>
<feature type="binding site" evidence="1">
    <location>
        <position position="77"/>
    </location>
    <ligand>
        <name>thiamine diphosphate</name>
        <dbReference type="ChEBI" id="CHEBI:58937"/>
    </ligand>
</feature>
<feature type="binding site" evidence="1">
    <location>
        <begin position="118"/>
        <end position="120"/>
    </location>
    <ligand>
        <name>thiamine diphosphate</name>
        <dbReference type="ChEBI" id="CHEBI:58937"/>
    </ligand>
</feature>
<feature type="binding site" evidence="1">
    <location>
        <position position="149"/>
    </location>
    <ligand>
        <name>Mg(2+)</name>
        <dbReference type="ChEBI" id="CHEBI:18420"/>
    </ligand>
</feature>
<feature type="binding site" evidence="1">
    <location>
        <begin position="150"/>
        <end position="151"/>
    </location>
    <ligand>
        <name>thiamine diphosphate</name>
        <dbReference type="ChEBI" id="CHEBI:58937"/>
    </ligand>
</feature>
<feature type="binding site" evidence="1">
    <location>
        <position position="178"/>
    </location>
    <ligand>
        <name>Mg(2+)</name>
        <dbReference type="ChEBI" id="CHEBI:18420"/>
    </ligand>
</feature>
<feature type="binding site" evidence="1">
    <location>
        <position position="178"/>
    </location>
    <ligand>
        <name>thiamine diphosphate</name>
        <dbReference type="ChEBI" id="CHEBI:58937"/>
    </ligand>
</feature>
<feature type="binding site" evidence="1">
    <location>
        <position position="290"/>
    </location>
    <ligand>
        <name>thiamine diphosphate</name>
        <dbReference type="ChEBI" id="CHEBI:58937"/>
    </ligand>
</feature>
<feature type="binding site" evidence="1">
    <location>
        <position position="375"/>
    </location>
    <ligand>
        <name>thiamine diphosphate</name>
        <dbReference type="ChEBI" id="CHEBI:58937"/>
    </ligand>
</feature>
<name>DXS_CHLPM</name>
<accession>A4SDG1</accession>
<organism>
    <name type="scientific">Chlorobium phaeovibrioides (strain DSM 265 / 1930)</name>
    <name type="common">Prosthecochloris vibrioformis (strain DSM 265)</name>
    <dbReference type="NCBI Taxonomy" id="290318"/>
    <lineage>
        <taxon>Bacteria</taxon>
        <taxon>Pseudomonadati</taxon>
        <taxon>Chlorobiota</taxon>
        <taxon>Chlorobiia</taxon>
        <taxon>Chlorobiales</taxon>
        <taxon>Chlorobiaceae</taxon>
        <taxon>Chlorobium/Pelodictyon group</taxon>
        <taxon>Chlorobium</taxon>
    </lineage>
</organism>
<keyword id="KW-0414">Isoprene biosynthesis</keyword>
<keyword id="KW-0460">Magnesium</keyword>
<keyword id="KW-0479">Metal-binding</keyword>
<keyword id="KW-0784">Thiamine biosynthesis</keyword>
<keyword id="KW-0786">Thiamine pyrophosphate</keyword>
<keyword id="KW-0808">Transferase</keyword>
<dbReference type="EC" id="2.2.1.7" evidence="1"/>
<dbReference type="EMBL" id="CP000607">
    <property type="protein sequence ID" value="ABP36520.1"/>
    <property type="molecule type" value="Genomic_DNA"/>
</dbReference>
<dbReference type="SMR" id="A4SDG1"/>
<dbReference type="STRING" id="290318.Cvib_0498"/>
<dbReference type="KEGG" id="pvi:Cvib_0498"/>
<dbReference type="eggNOG" id="COG1154">
    <property type="taxonomic scope" value="Bacteria"/>
</dbReference>
<dbReference type="HOGENOM" id="CLU_009227_1_4_10"/>
<dbReference type="OrthoDB" id="9803371at2"/>
<dbReference type="UniPathway" id="UPA00064">
    <property type="reaction ID" value="UER00091"/>
</dbReference>
<dbReference type="GO" id="GO:0005829">
    <property type="term" value="C:cytosol"/>
    <property type="evidence" value="ECO:0007669"/>
    <property type="project" value="TreeGrafter"/>
</dbReference>
<dbReference type="GO" id="GO:0008661">
    <property type="term" value="F:1-deoxy-D-xylulose-5-phosphate synthase activity"/>
    <property type="evidence" value="ECO:0007669"/>
    <property type="project" value="UniProtKB-UniRule"/>
</dbReference>
<dbReference type="GO" id="GO:0000287">
    <property type="term" value="F:magnesium ion binding"/>
    <property type="evidence" value="ECO:0007669"/>
    <property type="project" value="UniProtKB-UniRule"/>
</dbReference>
<dbReference type="GO" id="GO:0030976">
    <property type="term" value="F:thiamine pyrophosphate binding"/>
    <property type="evidence" value="ECO:0007669"/>
    <property type="project" value="UniProtKB-UniRule"/>
</dbReference>
<dbReference type="GO" id="GO:0052865">
    <property type="term" value="P:1-deoxy-D-xylulose 5-phosphate biosynthetic process"/>
    <property type="evidence" value="ECO:0007669"/>
    <property type="project" value="UniProtKB-UniPathway"/>
</dbReference>
<dbReference type="GO" id="GO:0019288">
    <property type="term" value="P:isopentenyl diphosphate biosynthetic process, methylerythritol 4-phosphate pathway"/>
    <property type="evidence" value="ECO:0007669"/>
    <property type="project" value="TreeGrafter"/>
</dbReference>
<dbReference type="GO" id="GO:0016114">
    <property type="term" value="P:terpenoid biosynthetic process"/>
    <property type="evidence" value="ECO:0007669"/>
    <property type="project" value="UniProtKB-UniRule"/>
</dbReference>
<dbReference type="GO" id="GO:0009228">
    <property type="term" value="P:thiamine biosynthetic process"/>
    <property type="evidence" value="ECO:0007669"/>
    <property type="project" value="UniProtKB-UniRule"/>
</dbReference>
<dbReference type="CDD" id="cd02007">
    <property type="entry name" value="TPP_DXS"/>
    <property type="match status" value="1"/>
</dbReference>
<dbReference type="CDD" id="cd07033">
    <property type="entry name" value="TPP_PYR_DXS_TK_like"/>
    <property type="match status" value="1"/>
</dbReference>
<dbReference type="FunFam" id="3.40.50.920:FF:000002">
    <property type="entry name" value="1-deoxy-D-xylulose-5-phosphate synthase"/>
    <property type="match status" value="1"/>
</dbReference>
<dbReference type="FunFam" id="3.40.50.970:FF:000005">
    <property type="entry name" value="1-deoxy-D-xylulose-5-phosphate synthase"/>
    <property type="match status" value="1"/>
</dbReference>
<dbReference type="Gene3D" id="3.40.50.920">
    <property type="match status" value="1"/>
</dbReference>
<dbReference type="Gene3D" id="3.40.50.970">
    <property type="match status" value="2"/>
</dbReference>
<dbReference type="HAMAP" id="MF_00315">
    <property type="entry name" value="DXP_synth"/>
    <property type="match status" value="1"/>
</dbReference>
<dbReference type="InterPro" id="IPR005477">
    <property type="entry name" value="Dxylulose-5-P_synthase"/>
</dbReference>
<dbReference type="InterPro" id="IPR029061">
    <property type="entry name" value="THDP-binding"/>
</dbReference>
<dbReference type="InterPro" id="IPR009014">
    <property type="entry name" value="Transketo_C/PFOR_II"/>
</dbReference>
<dbReference type="InterPro" id="IPR005475">
    <property type="entry name" value="Transketolase-like_Pyr-bd"/>
</dbReference>
<dbReference type="InterPro" id="IPR033248">
    <property type="entry name" value="Transketolase_C"/>
</dbReference>
<dbReference type="InterPro" id="IPR049557">
    <property type="entry name" value="Transketolase_CS"/>
</dbReference>
<dbReference type="NCBIfam" id="TIGR00204">
    <property type="entry name" value="dxs"/>
    <property type="match status" value="1"/>
</dbReference>
<dbReference type="NCBIfam" id="NF003933">
    <property type="entry name" value="PRK05444.2-2"/>
    <property type="match status" value="1"/>
</dbReference>
<dbReference type="PANTHER" id="PTHR43322">
    <property type="entry name" value="1-D-DEOXYXYLULOSE 5-PHOSPHATE SYNTHASE-RELATED"/>
    <property type="match status" value="1"/>
</dbReference>
<dbReference type="PANTHER" id="PTHR43322:SF5">
    <property type="entry name" value="1-DEOXY-D-XYLULOSE-5-PHOSPHATE SYNTHASE, CHLOROPLASTIC"/>
    <property type="match status" value="1"/>
</dbReference>
<dbReference type="Pfam" id="PF13292">
    <property type="entry name" value="DXP_synthase_N"/>
    <property type="match status" value="1"/>
</dbReference>
<dbReference type="Pfam" id="PF02779">
    <property type="entry name" value="Transket_pyr"/>
    <property type="match status" value="1"/>
</dbReference>
<dbReference type="Pfam" id="PF02780">
    <property type="entry name" value="Transketolase_C"/>
    <property type="match status" value="1"/>
</dbReference>
<dbReference type="SMART" id="SM00861">
    <property type="entry name" value="Transket_pyr"/>
    <property type="match status" value="1"/>
</dbReference>
<dbReference type="SUPFAM" id="SSF52518">
    <property type="entry name" value="Thiamin diphosphate-binding fold (THDP-binding)"/>
    <property type="match status" value="2"/>
</dbReference>
<dbReference type="SUPFAM" id="SSF52922">
    <property type="entry name" value="TK C-terminal domain-like"/>
    <property type="match status" value="1"/>
</dbReference>
<dbReference type="PROSITE" id="PS00801">
    <property type="entry name" value="TRANSKETOLASE_1"/>
    <property type="match status" value="1"/>
</dbReference>
<evidence type="ECO:0000255" key="1">
    <source>
        <dbReference type="HAMAP-Rule" id="MF_00315"/>
    </source>
</evidence>
<comment type="function">
    <text evidence="1">Catalyzes the acyloin condensation reaction between C atoms 2 and 3 of pyruvate and glyceraldehyde 3-phosphate to yield 1-deoxy-D-xylulose-5-phosphate (DXP).</text>
</comment>
<comment type="catalytic activity">
    <reaction evidence="1">
        <text>D-glyceraldehyde 3-phosphate + pyruvate + H(+) = 1-deoxy-D-xylulose 5-phosphate + CO2</text>
        <dbReference type="Rhea" id="RHEA:12605"/>
        <dbReference type="ChEBI" id="CHEBI:15361"/>
        <dbReference type="ChEBI" id="CHEBI:15378"/>
        <dbReference type="ChEBI" id="CHEBI:16526"/>
        <dbReference type="ChEBI" id="CHEBI:57792"/>
        <dbReference type="ChEBI" id="CHEBI:59776"/>
        <dbReference type="EC" id="2.2.1.7"/>
    </reaction>
</comment>
<comment type="cofactor">
    <cofactor evidence="1">
        <name>Mg(2+)</name>
        <dbReference type="ChEBI" id="CHEBI:18420"/>
    </cofactor>
    <text evidence="1">Binds 1 Mg(2+) ion per subunit.</text>
</comment>
<comment type="cofactor">
    <cofactor evidence="1">
        <name>thiamine diphosphate</name>
        <dbReference type="ChEBI" id="CHEBI:58937"/>
    </cofactor>
    <text evidence="1">Binds 1 thiamine pyrophosphate per subunit.</text>
</comment>
<comment type="pathway">
    <text evidence="1">Metabolic intermediate biosynthesis; 1-deoxy-D-xylulose 5-phosphate biosynthesis; 1-deoxy-D-xylulose 5-phosphate from D-glyceraldehyde 3-phosphate and pyruvate: step 1/1.</text>
</comment>
<comment type="subunit">
    <text evidence="1">Homodimer.</text>
</comment>
<comment type="similarity">
    <text evidence="1">Belongs to the transketolase family. DXPS subfamily.</text>
</comment>
<protein>
    <recommendedName>
        <fullName evidence="1">1-deoxy-D-xylulose-5-phosphate synthase</fullName>
        <ecNumber evidence="1">2.2.1.7</ecNumber>
    </recommendedName>
    <alternativeName>
        <fullName evidence="1">1-deoxyxylulose-5-phosphate synthase</fullName>
        <shortName evidence="1">DXP synthase</shortName>
        <shortName evidence="1">DXPS</shortName>
    </alternativeName>
</protein>
<reference key="1">
    <citation type="submission" date="2007-03" db="EMBL/GenBank/DDBJ databases">
        <title>Complete sequence of Prosthecochloris vibrioformis DSM 265.</title>
        <authorList>
            <consortium name="US DOE Joint Genome Institute"/>
            <person name="Copeland A."/>
            <person name="Lucas S."/>
            <person name="Lapidus A."/>
            <person name="Barry K."/>
            <person name="Detter J.C."/>
            <person name="Glavina del Rio T."/>
            <person name="Hammon N."/>
            <person name="Israni S."/>
            <person name="Pitluck S."/>
            <person name="Schmutz J."/>
            <person name="Larimer F."/>
            <person name="Land M."/>
            <person name="Hauser L."/>
            <person name="Mikhailova N."/>
            <person name="Li T."/>
            <person name="Overmann J."/>
            <person name="Schuster S.C."/>
            <person name="Bryant D.A."/>
            <person name="Richardson P."/>
        </authorList>
    </citation>
    <scope>NUCLEOTIDE SEQUENCE [LARGE SCALE GENOMIC DNA]</scope>
    <source>
        <strain>DSM 265 / 1930</strain>
    </source>
</reference>
<sequence length="635" mass="68758">MADSRSLLDTINSPRDLKKLSIRQLETLANECRHELINLISLNGGHFASSLGVTELSVALHHVYNTEKDRIVWDVGHQAYIHKMLTGRRERMNSNRKYGGISGFPKIHESPHDAFGTGHASTSISAAAGIASARDLKGGNEKVIAVIGDGSMTGGMAFEAMNHLGDLKNDVLVILNDNQMAISPSTGGLKTHMVNFTLNKTYNKARRLLWESMSMMNNDLAERAKTSLRRLEDGMKAALTPGAFFEALGLRYFGPIDGHNMGQLVRALREMQELPHPKLLHVITTKGKGFLPAEENQSDWHAHNGGFDTVTGITAKKEGPSATPKYQEVFGEALVEMALKDPAITAITAAMPTGTSLDLFQKAMPDRFYDVGIAEGHAVTFAAGQALEGLKPVCAIYSTFLQRALDQVIHDVALQNLPVVFAIDRAGLVGEDGPTHHGAFDLSYLHAVPGLTIMAPSDGQELRDMLHTALYHIDGPVAIRYPRGSTGGEEMRKNFTALEPGKGRMLKEGTGPVILTLGTMAATALEAGRLLENEGISVEIADMRFLKPLDTALIDRLSASATHIVTLEENSIIGGFGSAVADHLSEASKKTRLLRIGLPDAFVTHGSMTDLYRETGLDAPAVAEKIRLFYTGRES</sequence>
<gene>
    <name evidence="1" type="primary">dxs</name>
    <name type="ordered locus">Cvib_0498</name>
</gene>